<proteinExistence type="predicted"/>
<sequence length="121" mass="14414">MNLKEIPVHDHFRETVAYDFCAPHHTYYFDKIFNQYKSAYQKPEKVDEGVQTTLRGDIKLEPFEKAVDRFRKQLSVARKLREENPDAESVDEEKERLELFQCVKVILGEDIWMEYVIQSGK</sequence>
<dbReference type="EMBL" id="FO080583">
    <property type="protein sequence ID" value="CCD64862.1"/>
    <property type="molecule type" value="Genomic_DNA"/>
</dbReference>
<dbReference type="PIR" id="T27767">
    <property type="entry name" value="T27767"/>
</dbReference>
<dbReference type="RefSeq" id="NP_495057.1">
    <property type="nucleotide sequence ID" value="NM_062656.2"/>
</dbReference>
<dbReference type="SMR" id="Q09375"/>
<dbReference type="FunCoup" id="Q09375">
    <property type="interactions" value="289"/>
</dbReference>
<dbReference type="PaxDb" id="6239-ZK177.9"/>
<dbReference type="PeptideAtlas" id="Q09375"/>
<dbReference type="EnsemblMetazoa" id="ZK177.9.1">
    <property type="protein sequence ID" value="ZK177.9.1"/>
    <property type="gene ID" value="WBGene00022674"/>
</dbReference>
<dbReference type="GeneID" id="191238"/>
<dbReference type="KEGG" id="cel:CELE_ZK177.9"/>
<dbReference type="UCSC" id="ZK177.9">
    <property type="organism name" value="c. elegans"/>
</dbReference>
<dbReference type="AGR" id="WB:WBGene00022674"/>
<dbReference type="CTD" id="191238"/>
<dbReference type="WormBase" id="ZK177.9">
    <property type="protein sequence ID" value="CE02098"/>
    <property type="gene ID" value="WBGene00022674"/>
</dbReference>
<dbReference type="HOGENOM" id="CLU_2040165_0_0_1"/>
<dbReference type="InParanoid" id="Q09375"/>
<dbReference type="OrthoDB" id="10574754at2759"/>
<dbReference type="PRO" id="PR:Q09375"/>
<dbReference type="Proteomes" id="UP000001940">
    <property type="component" value="Chromosome II"/>
</dbReference>
<dbReference type="Bgee" id="WBGene00022674">
    <property type="expression patterns" value="Expressed in anatomical system and 4 other cell types or tissues"/>
</dbReference>
<protein>
    <recommendedName>
        <fullName>Uncharacterized protein ZK177.9</fullName>
    </recommendedName>
</protein>
<reference key="1">
    <citation type="journal article" date="1998" name="Science">
        <title>Genome sequence of the nematode C. elegans: a platform for investigating biology.</title>
        <authorList>
            <consortium name="The C. elegans sequencing consortium"/>
        </authorList>
    </citation>
    <scope>NUCLEOTIDE SEQUENCE [LARGE SCALE GENOMIC DNA]</scope>
    <source>
        <strain>Bristol N2</strain>
    </source>
</reference>
<feature type="chain" id="PRO_0000065508" description="Uncharacterized protein ZK177.9">
    <location>
        <begin position="1"/>
        <end position="121"/>
    </location>
</feature>
<organism>
    <name type="scientific">Caenorhabditis elegans</name>
    <dbReference type="NCBI Taxonomy" id="6239"/>
    <lineage>
        <taxon>Eukaryota</taxon>
        <taxon>Metazoa</taxon>
        <taxon>Ecdysozoa</taxon>
        <taxon>Nematoda</taxon>
        <taxon>Chromadorea</taxon>
        <taxon>Rhabditida</taxon>
        <taxon>Rhabditina</taxon>
        <taxon>Rhabditomorpha</taxon>
        <taxon>Rhabditoidea</taxon>
        <taxon>Rhabditidae</taxon>
        <taxon>Peloderinae</taxon>
        <taxon>Caenorhabditis</taxon>
    </lineage>
</organism>
<accession>Q09375</accession>
<keyword id="KW-1185">Reference proteome</keyword>
<gene>
    <name type="ORF">ZK177.9</name>
</gene>
<name>YS49_CAEEL</name>